<name>CH60_BRUA1</name>
<protein>
    <recommendedName>
        <fullName evidence="1">Chaperonin GroEL</fullName>
        <ecNumber evidence="1">5.6.1.7</ecNumber>
    </recommendedName>
    <alternativeName>
        <fullName evidence="1">60 kDa chaperonin</fullName>
    </alternativeName>
    <alternativeName>
        <fullName evidence="1">Chaperonin-60</fullName>
        <shortName evidence="1">Cpn60</shortName>
    </alternativeName>
</protein>
<proteinExistence type="evidence at transcript level"/>
<evidence type="ECO:0000255" key="1">
    <source>
        <dbReference type="HAMAP-Rule" id="MF_00600"/>
    </source>
</evidence>
<evidence type="ECO:0000269" key="2">
    <source>
    </source>
</evidence>
<evidence type="ECO:0000305" key="3"/>
<keyword id="KW-0067">ATP-binding</keyword>
<keyword id="KW-0143">Chaperone</keyword>
<keyword id="KW-0963">Cytoplasm</keyword>
<keyword id="KW-0413">Isomerase</keyword>
<keyword id="KW-0547">Nucleotide-binding</keyword>
<feature type="chain" id="PRO_1000129982" description="Chaperonin GroEL">
    <location>
        <begin position="1"/>
        <end position="546"/>
    </location>
</feature>
<feature type="binding site" evidence="1">
    <location>
        <begin position="30"/>
        <end position="33"/>
    </location>
    <ligand>
        <name>ATP</name>
        <dbReference type="ChEBI" id="CHEBI:30616"/>
    </ligand>
</feature>
<feature type="binding site" evidence="1">
    <location>
        <position position="51"/>
    </location>
    <ligand>
        <name>ATP</name>
        <dbReference type="ChEBI" id="CHEBI:30616"/>
    </ligand>
</feature>
<feature type="binding site" evidence="1">
    <location>
        <begin position="87"/>
        <end position="91"/>
    </location>
    <ligand>
        <name>ATP</name>
        <dbReference type="ChEBI" id="CHEBI:30616"/>
    </ligand>
</feature>
<feature type="binding site" evidence="1">
    <location>
        <position position="415"/>
    </location>
    <ligand>
        <name>ATP</name>
        <dbReference type="ChEBI" id="CHEBI:30616"/>
    </ligand>
</feature>
<feature type="binding site" evidence="1">
    <location>
        <position position="495"/>
    </location>
    <ligand>
        <name>ATP</name>
        <dbReference type="ChEBI" id="CHEBI:30616"/>
    </ligand>
</feature>
<feature type="sequence conflict" description="In Ref. 2; AAA22995." evidence="3" ref="2">
    <original>GR</original>
    <variation>A</variation>
    <location>
        <begin position="35"/>
        <end position="36"/>
    </location>
</feature>
<feature type="sequence conflict" description="In Ref. 1; AAA22997 and 2; AAA22995." evidence="3" ref="1 2">
    <original>G</original>
    <variation>A</variation>
    <location>
        <position position="154"/>
    </location>
</feature>
<feature type="sequence conflict" description="In Ref. 2; AAA22995." evidence="3" ref="2">
    <original>EAE</original>
    <variation>KQ</variation>
    <location>
        <begin position="155"/>
        <end position="157"/>
    </location>
</feature>
<feature type="sequence conflict" description="In Ref. 2; AAA22995." evidence="3" ref="2">
    <original>A</original>
    <variation>R</variation>
    <location>
        <position position="258"/>
    </location>
</feature>
<feature type="sequence conflict" description="In Ref. 2; AAA22995." evidence="3" ref="2">
    <original>A</original>
    <variation>R</variation>
    <location>
        <position position="278"/>
    </location>
</feature>
<feature type="sequence conflict" description="In Ref. 2; AAA22995." evidence="3" ref="2">
    <original>A</original>
    <variation>R</variation>
    <location>
        <position position="287"/>
    </location>
</feature>
<comment type="function">
    <text evidence="1">Together with its co-chaperonin GroES, plays an essential role in assisting protein folding. The GroEL-GroES system forms a nano-cage that allows encapsulation of the non-native substrate proteins and provides a physical environment optimized to promote and accelerate protein folding.</text>
</comment>
<comment type="catalytic activity">
    <reaction evidence="1">
        <text>ATP + H2O + a folded polypeptide = ADP + phosphate + an unfolded polypeptide.</text>
        <dbReference type="EC" id="5.6.1.7"/>
    </reaction>
</comment>
<comment type="subunit">
    <text evidence="1">Forms a cylinder of 14 subunits composed of two heptameric rings stacked back-to-back. Interacts with the co-chaperonin GroES.</text>
</comment>
<comment type="subcellular location">
    <subcellularLocation>
        <location evidence="1">Cytoplasm</location>
    </subcellularLocation>
</comment>
<comment type="induction">
    <text evidence="2">By heat shock.</text>
</comment>
<comment type="similarity">
    <text evidence="1">Belongs to the chaperonin (HSP60) family.</text>
</comment>
<reference key="1">
    <citation type="journal article" date="1992" name="Biochim. Biophys. Acta">
        <title>Cloning and nucleotide sequence of the Brucella abortus groE operon.</title>
        <authorList>
            <person name="Gor D."/>
            <person name="Mayfield J.E."/>
        </authorList>
    </citation>
    <scope>NUCLEOTIDE SEQUENCE [GENOMIC DNA]</scope>
</reference>
<reference key="2">
    <citation type="journal article" date="1992" name="Infect. Immun.">
        <title>Characterization of the heat shock response in Brucella abortus and isolation of the genes encoding the GroE heat shock proteins.</title>
        <authorList>
            <person name="Lin J."/>
            <person name="Adams L.G."/>
            <person name="Ficht T.A."/>
        </authorList>
    </citation>
    <scope>NUCLEOTIDE SEQUENCE [GENOMIC DNA]</scope>
    <scope>INDUCTION</scope>
</reference>
<reference key="3">
    <citation type="journal article" date="2008" name="PLoS ONE">
        <title>Genome sequence of Brucella abortus vaccine strain S19 compared to virulent strains yields candidate virulence genes.</title>
        <authorList>
            <person name="Crasta O.R."/>
            <person name="Folkerts O."/>
            <person name="Fei Z."/>
            <person name="Mane S.P."/>
            <person name="Evans C."/>
            <person name="Martino-Catt S."/>
            <person name="Bricker B."/>
            <person name="Yu G."/>
            <person name="Du L."/>
            <person name="Sobral B.W."/>
        </authorList>
    </citation>
    <scope>NUCLEOTIDE SEQUENCE [LARGE SCALE GENOMIC DNA]</scope>
    <source>
        <strain>S19</strain>
    </source>
</reference>
<organism>
    <name type="scientific">Brucella abortus (strain S19)</name>
    <dbReference type="NCBI Taxonomy" id="430066"/>
    <lineage>
        <taxon>Bacteria</taxon>
        <taxon>Pseudomonadati</taxon>
        <taxon>Pseudomonadota</taxon>
        <taxon>Alphaproteobacteria</taxon>
        <taxon>Hyphomicrobiales</taxon>
        <taxon>Brucellaceae</taxon>
        <taxon>Brucella/Ochrobactrum group</taxon>
        <taxon>Brucella</taxon>
    </lineage>
</organism>
<sequence length="546" mass="57515">MAAKDVKFGRTAREKMLRGVDILADAVKVTLGPKGRNVVIEKSFGAPRITKDGVSVAKEVELEDKFENMGAQMLREVASKTNDTAGDGTTTATVLGQAIVQEGAKAVAAGMNPMDLKRGIDLAVNEVVAELLKKAKKINTSEEVAQVGTISANGEAEIGKMIAEAMQKVGNEGVITVEEAKTAETELEVVEGMQFDRGYLSPYFVTNPEKMVADLEDAYILLHEKKLSNLQALLPVLEAVVQTSKPLLIIAEDVEGEALATLVVNKLRGGLKIAAVKAPGFGDRRKAMLEDIAILTGGQVISEDLGIKLESVTLDMLGRAKKVSISKENTTIVDGAGQKAEIDARVGQIKQQIEETTSDYDREKLQERLAKLAGGVAVIRVGGATEVEVKEKKDRVDDALNATRAAVEEGIVAGGGTALLRASTKITAKGVNADQEAGINIVRRAIQAPARQITTNAGEEASVIVGKILENTSETFGYNTANGEYGDLISLGIVDPVKVVRTALQNAASVAGLLITTEAMIAELPKKDAAPAGMPGGMGGMGGMDF</sequence>
<accession>B2SCZ4</accession>
<accession>P25967</accession>
<accession>Q579Q0</accession>
<dbReference type="EC" id="5.6.1.7" evidence="1"/>
<dbReference type="EMBL" id="M82975">
    <property type="protein sequence ID" value="AAA22997.1"/>
    <property type="molecule type" value="Genomic_DNA"/>
</dbReference>
<dbReference type="EMBL" id="M83930">
    <property type="protein sequence ID" value="AAA22995.1"/>
    <property type="molecule type" value="Genomic_DNA"/>
</dbReference>
<dbReference type="EMBL" id="CP000888">
    <property type="protein sequence ID" value="ACD73698.1"/>
    <property type="molecule type" value="Genomic_DNA"/>
</dbReference>
<dbReference type="PIR" id="B43827">
    <property type="entry name" value="B43827"/>
</dbReference>
<dbReference type="PIR" id="S22347">
    <property type="entry name" value="S22347"/>
</dbReference>
<dbReference type="RefSeq" id="WP_002966387.1">
    <property type="nucleotide sequence ID" value="NC_010740.1"/>
</dbReference>
<dbReference type="SMR" id="B2SCZ4"/>
<dbReference type="GeneID" id="93015849"/>
<dbReference type="KEGG" id="bmc:BAbS19_II01790"/>
<dbReference type="HOGENOM" id="CLU_016503_3_0_5"/>
<dbReference type="Proteomes" id="UP000002565">
    <property type="component" value="Chromosome 2"/>
</dbReference>
<dbReference type="GO" id="GO:0005737">
    <property type="term" value="C:cytoplasm"/>
    <property type="evidence" value="ECO:0007669"/>
    <property type="project" value="UniProtKB-SubCell"/>
</dbReference>
<dbReference type="GO" id="GO:0005524">
    <property type="term" value="F:ATP binding"/>
    <property type="evidence" value="ECO:0007669"/>
    <property type="project" value="UniProtKB-UniRule"/>
</dbReference>
<dbReference type="GO" id="GO:0140662">
    <property type="term" value="F:ATP-dependent protein folding chaperone"/>
    <property type="evidence" value="ECO:0007669"/>
    <property type="project" value="InterPro"/>
</dbReference>
<dbReference type="GO" id="GO:0016853">
    <property type="term" value="F:isomerase activity"/>
    <property type="evidence" value="ECO:0007669"/>
    <property type="project" value="UniProtKB-KW"/>
</dbReference>
<dbReference type="GO" id="GO:0051082">
    <property type="term" value="F:unfolded protein binding"/>
    <property type="evidence" value="ECO:0007669"/>
    <property type="project" value="UniProtKB-UniRule"/>
</dbReference>
<dbReference type="GO" id="GO:0042026">
    <property type="term" value="P:protein refolding"/>
    <property type="evidence" value="ECO:0007669"/>
    <property type="project" value="UniProtKB-UniRule"/>
</dbReference>
<dbReference type="CDD" id="cd03344">
    <property type="entry name" value="GroEL"/>
    <property type="match status" value="1"/>
</dbReference>
<dbReference type="FunFam" id="1.10.560.10:FF:000001">
    <property type="entry name" value="60 kDa chaperonin"/>
    <property type="match status" value="1"/>
</dbReference>
<dbReference type="FunFam" id="3.50.7.10:FF:000001">
    <property type="entry name" value="60 kDa chaperonin"/>
    <property type="match status" value="1"/>
</dbReference>
<dbReference type="Gene3D" id="3.50.7.10">
    <property type="entry name" value="GroEL"/>
    <property type="match status" value="1"/>
</dbReference>
<dbReference type="Gene3D" id="1.10.560.10">
    <property type="entry name" value="GroEL-like equatorial domain"/>
    <property type="match status" value="1"/>
</dbReference>
<dbReference type="Gene3D" id="3.30.260.10">
    <property type="entry name" value="TCP-1-like chaperonin intermediate domain"/>
    <property type="match status" value="1"/>
</dbReference>
<dbReference type="HAMAP" id="MF_00600">
    <property type="entry name" value="CH60"/>
    <property type="match status" value="1"/>
</dbReference>
<dbReference type="InterPro" id="IPR018370">
    <property type="entry name" value="Chaperonin_Cpn60_CS"/>
</dbReference>
<dbReference type="InterPro" id="IPR001844">
    <property type="entry name" value="Cpn60/GroEL"/>
</dbReference>
<dbReference type="InterPro" id="IPR002423">
    <property type="entry name" value="Cpn60/GroEL/TCP-1"/>
</dbReference>
<dbReference type="InterPro" id="IPR027409">
    <property type="entry name" value="GroEL-like_apical_dom_sf"/>
</dbReference>
<dbReference type="InterPro" id="IPR027413">
    <property type="entry name" value="GROEL-like_equatorial_sf"/>
</dbReference>
<dbReference type="InterPro" id="IPR027410">
    <property type="entry name" value="TCP-1-like_intermed_sf"/>
</dbReference>
<dbReference type="NCBIfam" id="TIGR02348">
    <property type="entry name" value="GroEL"/>
    <property type="match status" value="1"/>
</dbReference>
<dbReference type="NCBIfam" id="NF000592">
    <property type="entry name" value="PRK00013.1"/>
    <property type="match status" value="1"/>
</dbReference>
<dbReference type="NCBIfam" id="NF009487">
    <property type="entry name" value="PRK12849.1"/>
    <property type="match status" value="1"/>
</dbReference>
<dbReference type="NCBIfam" id="NF009488">
    <property type="entry name" value="PRK12850.1"/>
    <property type="match status" value="1"/>
</dbReference>
<dbReference type="NCBIfam" id="NF009489">
    <property type="entry name" value="PRK12851.1"/>
    <property type="match status" value="1"/>
</dbReference>
<dbReference type="PANTHER" id="PTHR45633">
    <property type="entry name" value="60 KDA HEAT SHOCK PROTEIN, MITOCHONDRIAL"/>
    <property type="match status" value="1"/>
</dbReference>
<dbReference type="Pfam" id="PF00118">
    <property type="entry name" value="Cpn60_TCP1"/>
    <property type="match status" value="1"/>
</dbReference>
<dbReference type="PRINTS" id="PR00298">
    <property type="entry name" value="CHAPERONIN60"/>
</dbReference>
<dbReference type="SUPFAM" id="SSF52029">
    <property type="entry name" value="GroEL apical domain-like"/>
    <property type="match status" value="1"/>
</dbReference>
<dbReference type="SUPFAM" id="SSF48592">
    <property type="entry name" value="GroEL equatorial domain-like"/>
    <property type="match status" value="1"/>
</dbReference>
<dbReference type="SUPFAM" id="SSF54849">
    <property type="entry name" value="GroEL-intermediate domain like"/>
    <property type="match status" value="1"/>
</dbReference>
<dbReference type="PROSITE" id="PS00296">
    <property type="entry name" value="CHAPERONINS_CPN60"/>
    <property type="match status" value="1"/>
</dbReference>
<gene>
    <name evidence="1" type="primary">groEL</name>
    <name evidence="1" type="synonym">groL</name>
    <name type="ordered locus">BAbS19_II01790</name>
</gene>